<gene>
    <name evidence="1" type="primary">arhgap45</name>
    <name evidence="1" type="synonym">hmha1</name>
</gene>
<dbReference type="EMBL" id="BC077287">
    <property type="protein sequence ID" value="AAH77287.1"/>
    <property type="molecule type" value="mRNA"/>
</dbReference>
<dbReference type="RefSeq" id="NP_001086672.1">
    <property type="nucleotide sequence ID" value="NM_001093203.1"/>
</dbReference>
<dbReference type="SMR" id="Q6DE55"/>
<dbReference type="GeneID" id="446507"/>
<dbReference type="KEGG" id="xla:446507"/>
<dbReference type="AGR" id="Xenbase:XB-GENE-990083"/>
<dbReference type="CTD" id="446507"/>
<dbReference type="Xenbase" id="XB-GENE-990083">
    <property type="gene designation" value="arhgap45.L"/>
</dbReference>
<dbReference type="OrthoDB" id="79452at2759"/>
<dbReference type="Proteomes" id="UP000186698">
    <property type="component" value="Chromosome 1L"/>
</dbReference>
<dbReference type="Bgee" id="446507">
    <property type="expression patterns" value="Expressed in spleen and 18 other cell types or tissues"/>
</dbReference>
<dbReference type="GO" id="GO:0005737">
    <property type="term" value="C:cytoplasm"/>
    <property type="evidence" value="ECO:0007669"/>
    <property type="project" value="UniProtKB-SubCell"/>
</dbReference>
<dbReference type="GO" id="GO:0016020">
    <property type="term" value="C:membrane"/>
    <property type="evidence" value="ECO:0000318"/>
    <property type="project" value="GO_Central"/>
</dbReference>
<dbReference type="GO" id="GO:0032587">
    <property type="term" value="C:ruffle membrane"/>
    <property type="evidence" value="ECO:0007669"/>
    <property type="project" value="UniProtKB-SubCell"/>
</dbReference>
<dbReference type="GO" id="GO:0005096">
    <property type="term" value="F:GTPase activator activity"/>
    <property type="evidence" value="ECO:0000318"/>
    <property type="project" value="GO_Central"/>
</dbReference>
<dbReference type="GO" id="GO:0008270">
    <property type="term" value="F:zinc ion binding"/>
    <property type="evidence" value="ECO:0007669"/>
    <property type="project" value="UniProtKB-KW"/>
</dbReference>
<dbReference type="GO" id="GO:0051058">
    <property type="term" value="P:negative regulation of small GTPase mediated signal transduction"/>
    <property type="evidence" value="ECO:0000318"/>
    <property type="project" value="GO_Central"/>
</dbReference>
<dbReference type="GO" id="GO:0007165">
    <property type="term" value="P:signal transduction"/>
    <property type="evidence" value="ECO:0007669"/>
    <property type="project" value="InterPro"/>
</dbReference>
<dbReference type="CDD" id="cd20816">
    <property type="entry name" value="C1_GMIP-like"/>
    <property type="match status" value="1"/>
</dbReference>
<dbReference type="CDD" id="cd04409">
    <property type="entry name" value="RhoGAP_PARG1"/>
    <property type="match status" value="1"/>
</dbReference>
<dbReference type="FunFam" id="1.10.555.10:FF:000016">
    <property type="entry name" value="Rho GTPase activating protein 29"/>
    <property type="match status" value="1"/>
</dbReference>
<dbReference type="Gene3D" id="1.20.1270.60">
    <property type="entry name" value="Arfaptin homology (AH) domain/BAR domain"/>
    <property type="match status" value="1"/>
</dbReference>
<dbReference type="Gene3D" id="1.10.555.10">
    <property type="entry name" value="Rho GTPase activation protein"/>
    <property type="match status" value="1"/>
</dbReference>
<dbReference type="InterPro" id="IPR027267">
    <property type="entry name" value="AH/BAR_dom_sf"/>
</dbReference>
<dbReference type="InterPro" id="IPR046349">
    <property type="entry name" value="C1-like_sf"/>
</dbReference>
<dbReference type="InterPro" id="IPR031160">
    <property type="entry name" value="F_BAR"/>
</dbReference>
<dbReference type="InterPro" id="IPR001060">
    <property type="entry name" value="FCH_dom"/>
</dbReference>
<dbReference type="InterPro" id="IPR054713">
    <property type="entry name" value="GMIP/FCHO2-like_FCH"/>
</dbReference>
<dbReference type="InterPro" id="IPR002219">
    <property type="entry name" value="PE/DAG-bd"/>
</dbReference>
<dbReference type="InterPro" id="IPR057028">
    <property type="entry name" value="RHG29_45_N"/>
</dbReference>
<dbReference type="InterPro" id="IPR008936">
    <property type="entry name" value="Rho_GTPase_activation_prot"/>
</dbReference>
<dbReference type="InterPro" id="IPR051025">
    <property type="entry name" value="RhoGAP"/>
</dbReference>
<dbReference type="InterPro" id="IPR000198">
    <property type="entry name" value="RhoGAP_dom"/>
</dbReference>
<dbReference type="PANTHER" id="PTHR15228:SF18">
    <property type="entry name" value="RHO GTPASE-ACTIVATING PROTEIN 45"/>
    <property type="match status" value="1"/>
</dbReference>
<dbReference type="PANTHER" id="PTHR15228">
    <property type="entry name" value="SPERMATHECAL PHYSIOLOGY VARIANT"/>
    <property type="match status" value="1"/>
</dbReference>
<dbReference type="Pfam" id="PF00130">
    <property type="entry name" value="C1_1"/>
    <property type="match status" value="1"/>
</dbReference>
<dbReference type="Pfam" id="PF22699">
    <property type="entry name" value="GMIP-like_FCH"/>
    <property type="match status" value="1"/>
</dbReference>
<dbReference type="Pfam" id="PF24235">
    <property type="entry name" value="RHG29_45_N"/>
    <property type="match status" value="1"/>
</dbReference>
<dbReference type="Pfam" id="PF00620">
    <property type="entry name" value="RhoGAP"/>
    <property type="match status" value="1"/>
</dbReference>
<dbReference type="SMART" id="SM00109">
    <property type="entry name" value="C1"/>
    <property type="match status" value="1"/>
</dbReference>
<dbReference type="SMART" id="SM00055">
    <property type="entry name" value="FCH"/>
    <property type="match status" value="1"/>
</dbReference>
<dbReference type="SMART" id="SM00324">
    <property type="entry name" value="RhoGAP"/>
    <property type="match status" value="1"/>
</dbReference>
<dbReference type="SUPFAM" id="SSF103657">
    <property type="entry name" value="BAR/IMD domain-like"/>
    <property type="match status" value="1"/>
</dbReference>
<dbReference type="SUPFAM" id="SSF57889">
    <property type="entry name" value="Cysteine-rich domain"/>
    <property type="match status" value="1"/>
</dbReference>
<dbReference type="SUPFAM" id="SSF48350">
    <property type="entry name" value="GTPase activation domain, GAP"/>
    <property type="match status" value="1"/>
</dbReference>
<dbReference type="PROSITE" id="PS51741">
    <property type="entry name" value="F_BAR"/>
    <property type="match status" value="1"/>
</dbReference>
<dbReference type="PROSITE" id="PS50238">
    <property type="entry name" value="RHOGAP"/>
    <property type="match status" value="1"/>
</dbReference>
<dbReference type="PROSITE" id="PS00479">
    <property type="entry name" value="ZF_DAG_PE_1"/>
    <property type="match status" value="1"/>
</dbReference>
<dbReference type="PROSITE" id="PS50081">
    <property type="entry name" value="ZF_DAG_PE_2"/>
    <property type="match status" value="1"/>
</dbReference>
<sequence>MFSRKKRELMKTPSLSKKSRAGSPAPQNDLTRKDVTDSSNDLASSPPSNSSPVSSGTLKRPSSLSRHASAAGIPLSSPRGKATKPASTPSPPESGEGPFIDVEDISQLLGDVARFAERLEKLRDVVQDEELKETRRPLAHECLGEALRLLRQVINKYPLLNTVETLTAAGTLISKVKGFHYESSIENDKRDFEKALESMAVCFSSTISEFLMGEVDSSTLLSLPPGDQSQSMESLCGGLSGGEGALPSAHEYVEAGGHLGEDVDVILQRSDGGVQAALLYAKNMAKYLKDLSSYIEKRTILEMEYAKGLQKLVNAYKGTLNQETHMPFQSIYSVALEQDLEHGHGILHTALTLQHQTFLQPINMRRQEHEKRRKEVKEQWQRAQRKLMEAESNLRKARQAYMQRSEEHERALYNATRAEEEQSHSGTRSLDKKRRAEEEAKNRAEEAMATYRTCIADAKTQKQELEDVKVNVLRQLQELIKQSDQILRSATISYYQSMHMQTAPLPVGFQMLCESSKLYDLGQQYASYVRQLGAVNEPETSYDFQPYTPQITWSPCIRARKSSFNSQDIPSSENKEISGEERGVERRGGRGHQVHKSWPTAITEGDPAVSSATVPAFPEKLHQPLSPTENVDQKRLSASFEQSINGLSGSLEVQNSTGPFRNIGLSRAALTHRLRKLRTPSKCRECNSYVYFQGAECEECSLACHKKCLETLAIQCGHKKLQGRLLLFGRDFSETALRSPDHIPFLIRKCVSEIEERALIMKGIYRVNGVKTRVEKLCQAFENGKELVELSQASPHDLSNVLKLYLRQLPEPLIPFRLYNGLMGLAKESLRGTETGKGPRLQDKGPNTETDVLSIVVQLKELLQDLPSENRTTLQYLVKHLCRVSEQEQLNKMSPSNLGIVFGPALMRPRPTDATVSLSSLVDYPHQARIVETLIIFYSTIFQEPVSNTDIGTGNSSSDDTASMQSRARLQVTVEEDLSELTPEYQIPVFKEPGASTVESDSESDGAEDIPGTWKPQTTRGHLTKEASVTSAEDIPYIEGEAQSESEEDRDQTQENLAENNTNQSNNVAVNGHCCVPHFHCHTQLPAIRMMHGKIYVSSADRRPHFV</sequence>
<evidence type="ECO:0000250" key="1">
    <source>
        <dbReference type="UniProtKB" id="Q92619"/>
    </source>
</evidence>
<evidence type="ECO:0000255" key="2"/>
<evidence type="ECO:0000255" key="3">
    <source>
        <dbReference type="PROSITE-ProRule" id="PRU00172"/>
    </source>
</evidence>
<evidence type="ECO:0000255" key="4">
    <source>
        <dbReference type="PROSITE-ProRule" id="PRU00226"/>
    </source>
</evidence>
<evidence type="ECO:0000255" key="5">
    <source>
        <dbReference type="PROSITE-ProRule" id="PRU01077"/>
    </source>
</evidence>
<evidence type="ECO:0000256" key="6">
    <source>
        <dbReference type="SAM" id="MobiDB-lite"/>
    </source>
</evidence>
<organism>
    <name type="scientific">Xenopus laevis</name>
    <name type="common">African clawed frog</name>
    <dbReference type="NCBI Taxonomy" id="8355"/>
    <lineage>
        <taxon>Eukaryota</taxon>
        <taxon>Metazoa</taxon>
        <taxon>Chordata</taxon>
        <taxon>Craniata</taxon>
        <taxon>Vertebrata</taxon>
        <taxon>Euteleostomi</taxon>
        <taxon>Amphibia</taxon>
        <taxon>Batrachia</taxon>
        <taxon>Anura</taxon>
        <taxon>Pipoidea</taxon>
        <taxon>Pipidae</taxon>
        <taxon>Xenopodinae</taxon>
        <taxon>Xenopus</taxon>
        <taxon>Xenopus</taxon>
    </lineage>
</organism>
<proteinExistence type="evidence at transcript level"/>
<feature type="chain" id="PRO_0000330316" description="Rho GTPase-activating protein 45">
    <location>
        <begin position="1"/>
        <end position="1107"/>
    </location>
</feature>
<feature type="domain" description="F-BAR" evidence="5">
    <location>
        <begin position="261"/>
        <end position="524"/>
    </location>
</feature>
<feature type="domain" description="Rho-GAP" evidence="3">
    <location>
        <begin position="730"/>
        <end position="942"/>
    </location>
</feature>
<feature type="zinc finger region" description="Phorbol-ester/DAG-type" evidence="4">
    <location>
        <begin position="671"/>
        <end position="716"/>
    </location>
</feature>
<feature type="region of interest" description="Disordered" evidence="6">
    <location>
        <begin position="1"/>
        <end position="99"/>
    </location>
</feature>
<feature type="region of interest" description="Disordered" evidence="6">
    <location>
        <begin position="414"/>
        <end position="444"/>
    </location>
</feature>
<feature type="region of interest" description="Disordered" evidence="6">
    <location>
        <begin position="564"/>
        <end position="595"/>
    </location>
</feature>
<feature type="region of interest" description="Disordered" evidence="6">
    <location>
        <begin position="981"/>
        <end position="1036"/>
    </location>
</feature>
<feature type="coiled-coil region" evidence="2">
    <location>
        <begin position="103"/>
        <end position="132"/>
    </location>
</feature>
<feature type="coiled-coil region" evidence="2">
    <location>
        <begin position="363"/>
        <end position="485"/>
    </location>
</feature>
<feature type="compositionally biased region" description="Low complexity" evidence="6">
    <location>
        <begin position="37"/>
        <end position="55"/>
    </location>
</feature>
<feature type="compositionally biased region" description="Polar residues" evidence="6">
    <location>
        <begin position="56"/>
        <end position="66"/>
    </location>
</feature>
<feature type="compositionally biased region" description="Basic and acidic residues" evidence="6">
    <location>
        <begin position="414"/>
        <end position="423"/>
    </location>
</feature>
<feature type="compositionally biased region" description="Basic and acidic residues" evidence="6">
    <location>
        <begin position="434"/>
        <end position="444"/>
    </location>
</feature>
<feature type="compositionally biased region" description="Basic and acidic residues" evidence="6">
    <location>
        <begin position="573"/>
        <end position="588"/>
    </location>
</feature>
<feature type="compositionally biased region" description="Polar residues" evidence="6">
    <location>
        <begin position="1015"/>
        <end position="1031"/>
    </location>
</feature>
<feature type="site" description="Arginine finger; crucial for GTP hydrolysis by stabilizing the transition state" evidence="3">
    <location>
        <position position="766"/>
    </location>
</feature>
<comment type="function">
    <text evidence="1">Contains a GTPase activator for the Rho-type GTPases (RhoGAP) domain that would be able to negatively regulate the actin cytoskeleton as well as cell spreading. However, also contains N-terminally a BAR-domin which is able to play an autoinhibitory effect on this RhoGAP activity.</text>
</comment>
<comment type="subcellular location">
    <subcellularLocation>
        <location evidence="1">Cytoplasm</location>
    </subcellularLocation>
    <subcellularLocation>
        <location evidence="1">Cell projection</location>
        <location evidence="1">Ruffle membrane</location>
    </subcellularLocation>
</comment>
<comment type="domain">
    <text evidence="1">Rho-GAP domain is able to regulate RhoGTPase activity, actin cytoskeleton and cell spreading. However N-terminally BAR domain plays an autoinhibitory role.</text>
</comment>
<accession>Q6DE55</accession>
<protein>
    <recommendedName>
        <fullName evidence="1">Rho GTPase-activating protein 45</fullName>
    </recommendedName>
    <alternativeName>
        <fullName evidence="1">Minor histocompatibility protein HA-1</fullName>
    </alternativeName>
</protein>
<keyword id="KW-1003">Cell membrane</keyword>
<keyword id="KW-0966">Cell projection</keyword>
<keyword id="KW-0175">Coiled coil</keyword>
<keyword id="KW-0963">Cytoplasm</keyword>
<keyword id="KW-0343">GTPase activation</keyword>
<keyword id="KW-0472">Membrane</keyword>
<keyword id="KW-0479">Metal-binding</keyword>
<keyword id="KW-1185">Reference proteome</keyword>
<keyword id="KW-0862">Zinc</keyword>
<keyword id="KW-0863">Zinc-finger</keyword>
<name>HMHA1_XENLA</name>
<reference key="1">
    <citation type="submission" date="2004-07" db="EMBL/GenBank/DDBJ databases">
        <authorList>
            <consortium name="NIH - Xenopus Gene Collection (XGC) project"/>
        </authorList>
    </citation>
    <scope>NUCLEOTIDE SEQUENCE [LARGE SCALE MRNA]</scope>
    <source>
        <tissue>Spleen</tissue>
    </source>
</reference>